<comment type="catalytic activity">
    <reaction evidence="1">
        <text>tRNA(Leu) + L-leucine + ATP = L-leucyl-tRNA(Leu) + AMP + diphosphate</text>
        <dbReference type="Rhea" id="RHEA:11688"/>
        <dbReference type="Rhea" id="RHEA-COMP:9613"/>
        <dbReference type="Rhea" id="RHEA-COMP:9622"/>
        <dbReference type="ChEBI" id="CHEBI:30616"/>
        <dbReference type="ChEBI" id="CHEBI:33019"/>
        <dbReference type="ChEBI" id="CHEBI:57427"/>
        <dbReference type="ChEBI" id="CHEBI:78442"/>
        <dbReference type="ChEBI" id="CHEBI:78494"/>
        <dbReference type="ChEBI" id="CHEBI:456215"/>
        <dbReference type="EC" id="6.1.1.4"/>
    </reaction>
</comment>
<comment type="subcellular location">
    <subcellularLocation>
        <location evidence="1">Cytoplasm</location>
    </subcellularLocation>
</comment>
<comment type="similarity">
    <text evidence="1">Belongs to the class-I aminoacyl-tRNA synthetase family.</text>
</comment>
<accession>A6T6A3</accession>
<feature type="chain" id="PRO_1000009356" description="Leucine--tRNA ligase">
    <location>
        <begin position="1"/>
        <end position="860"/>
    </location>
</feature>
<feature type="short sequence motif" description="'HIGH' region">
    <location>
        <begin position="42"/>
        <end position="52"/>
    </location>
</feature>
<feature type="short sequence motif" description="'KMSKS' region">
    <location>
        <begin position="619"/>
        <end position="623"/>
    </location>
</feature>
<feature type="binding site" evidence="1">
    <location>
        <position position="622"/>
    </location>
    <ligand>
        <name>ATP</name>
        <dbReference type="ChEBI" id="CHEBI:30616"/>
    </ligand>
</feature>
<keyword id="KW-0030">Aminoacyl-tRNA synthetase</keyword>
<keyword id="KW-0067">ATP-binding</keyword>
<keyword id="KW-0963">Cytoplasm</keyword>
<keyword id="KW-0436">Ligase</keyword>
<keyword id="KW-0547">Nucleotide-binding</keyword>
<keyword id="KW-0648">Protein biosynthesis</keyword>
<evidence type="ECO:0000255" key="1">
    <source>
        <dbReference type="HAMAP-Rule" id="MF_00049"/>
    </source>
</evidence>
<organism>
    <name type="scientific">Klebsiella pneumoniae subsp. pneumoniae (strain ATCC 700721 / MGH 78578)</name>
    <dbReference type="NCBI Taxonomy" id="272620"/>
    <lineage>
        <taxon>Bacteria</taxon>
        <taxon>Pseudomonadati</taxon>
        <taxon>Pseudomonadota</taxon>
        <taxon>Gammaproteobacteria</taxon>
        <taxon>Enterobacterales</taxon>
        <taxon>Enterobacteriaceae</taxon>
        <taxon>Klebsiella/Raoultella group</taxon>
        <taxon>Klebsiella</taxon>
        <taxon>Klebsiella pneumoniae complex</taxon>
    </lineage>
</organism>
<sequence length="860" mass="97056">MQEQYRPEEIESKVQLHWDENRTFEVTEDESKEKYYCLSMLPYPSGRLHMGHVRNYTIGDVIARYQRMLGKNVLQPIGWDAFGLPAEGAAVKNNTAPAPWTYDNIAYMKNQLKMLGFGYDWSRELATCTPEYYRWEQKFFTELYKKGLVYKKTSAVNWCPNDQTVLANEQVIDGCCWRCDTKVERKEIPQWFIKITAYADELLNDLDKLDHWPDTVKTMQRNWIGRSEGVEISFDVNDYADKLTVYTTRPDTFMGCTYLAVAAGHPLAQQAAANNPALATFIDECRNTKVAEADMATMEKKGVDTGFKAIHPLTGEEIPVWAANFVLMEYGTGAVMAVPGHDQRDYEFASKYGLNIKPVILAADGSEPDLSEQALTEKGVLFNSGEFSGLDYEAGFNAIADKLAAMGVGERKVNYRLRDWGVSRQRYWGAPIPMVTLEDGTVLPTPEDQLPVILPEDVVMDGITSPIKADPEWAKTTVNGQPALRETDTFDTFMESSWYYARYTCPQYQEGMLDSKAANYWLPVDIYIGGIEHAIMHLLYFRFFHKLMRDAGMVNSDEPAKQLLCQGMVLADAFYYVGENGERNWVSPVDAIVERDEKGRIVKAKDAAGHELVYTGMSKMSKSKNNGIDPQVMVERYGADTVRLFMMFASPADMTLEWQESGVEGANRFLKRVWKLVYEHTTKGEVAALNVAALSEDQKALRRDIHKTIAKVTDDIGRRQTFNTAIAAIMELMNKLAKAPQEDEQDRALMQEALLAVVRMLNPFTPHASFTLWRELNGEGDIDNAPWPVADESAMVEDSTLVVVQVNGKVRGKITVAVDATEEQVRERAGQEHLVAKYLDGKTVRKVIYVPGKLLNLVVG</sequence>
<protein>
    <recommendedName>
        <fullName evidence="1">Leucine--tRNA ligase</fullName>
        <ecNumber evidence="1">6.1.1.4</ecNumber>
    </recommendedName>
    <alternativeName>
        <fullName evidence="1">Leucyl-tRNA synthetase</fullName>
        <shortName evidence="1">LeuRS</shortName>
    </alternativeName>
</protein>
<dbReference type="EC" id="6.1.1.4" evidence="1"/>
<dbReference type="EMBL" id="CP000647">
    <property type="protein sequence ID" value="ABR76124.1"/>
    <property type="molecule type" value="Genomic_DNA"/>
</dbReference>
<dbReference type="RefSeq" id="WP_004147581.1">
    <property type="nucleotide sequence ID" value="NC_009648.1"/>
</dbReference>
<dbReference type="SMR" id="A6T6A3"/>
<dbReference type="STRING" id="272620.KPN_00674"/>
<dbReference type="jPOST" id="A6T6A3"/>
<dbReference type="PaxDb" id="272620-KPN_00674"/>
<dbReference type="EnsemblBacteria" id="ABR76124">
    <property type="protein sequence ID" value="ABR76124"/>
    <property type="gene ID" value="KPN_00674"/>
</dbReference>
<dbReference type="KEGG" id="kpn:KPN_00674"/>
<dbReference type="HOGENOM" id="CLU_004427_0_0_6"/>
<dbReference type="Proteomes" id="UP000000265">
    <property type="component" value="Chromosome"/>
</dbReference>
<dbReference type="GO" id="GO:0005829">
    <property type="term" value="C:cytosol"/>
    <property type="evidence" value="ECO:0007669"/>
    <property type="project" value="TreeGrafter"/>
</dbReference>
<dbReference type="GO" id="GO:0002161">
    <property type="term" value="F:aminoacyl-tRNA deacylase activity"/>
    <property type="evidence" value="ECO:0007669"/>
    <property type="project" value="InterPro"/>
</dbReference>
<dbReference type="GO" id="GO:0005524">
    <property type="term" value="F:ATP binding"/>
    <property type="evidence" value="ECO:0007669"/>
    <property type="project" value="UniProtKB-UniRule"/>
</dbReference>
<dbReference type="GO" id="GO:0004823">
    <property type="term" value="F:leucine-tRNA ligase activity"/>
    <property type="evidence" value="ECO:0007669"/>
    <property type="project" value="UniProtKB-UniRule"/>
</dbReference>
<dbReference type="GO" id="GO:0006429">
    <property type="term" value="P:leucyl-tRNA aminoacylation"/>
    <property type="evidence" value="ECO:0007669"/>
    <property type="project" value="UniProtKB-UniRule"/>
</dbReference>
<dbReference type="CDD" id="cd07958">
    <property type="entry name" value="Anticodon_Ia_Leu_BEm"/>
    <property type="match status" value="1"/>
</dbReference>
<dbReference type="CDD" id="cd00812">
    <property type="entry name" value="LeuRS_core"/>
    <property type="match status" value="1"/>
</dbReference>
<dbReference type="FunFam" id="1.10.730.10:FF:000002">
    <property type="entry name" value="Leucine--tRNA ligase"/>
    <property type="match status" value="2"/>
</dbReference>
<dbReference type="FunFam" id="2.20.28.290:FF:000001">
    <property type="entry name" value="Leucine--tRNA ligase"/>
    <property type="match status" value="1"/>
</dbReference>
<dbReference type="FunFam" id="3.10.20.590:FF:000001">
    <property type="entry name" value="Leucine--tRNA ligase"/>
    <property type="match status" value="1"/>
</dbReference>
<dbReference type="FunFam" id="3.40.50.620:FF:000003">
    <property type="entry name" value="Leucine--tRNA ligase"/>
    <property type="match status" value="1"/>
</dbReference>
<dbReference type="FunFam" id="3.40.50.620:FF:000124">
    <property type="entry name" value="Leucine--tRNA ligase"/>
    <property type="match status" value="1"/>
</dbReference>
<dbReference type="FunFam" id="3.90.740.10:FF:000012">
    <property type="entry name" value="Leucine--tRNA ligase"/>
    <property type="match status" value="1"/>
</dbReference>
<dbReference type="Gene3D" id="2.20.28.290">
    <property type="match status" value="1"/>
</dbReference>
<dbReference type="Gene3D" id="3.10.20.590">
    <property type="match status" value="1"/>
</dbReference>
<dbReference type="Gene3D" id="3.40.50.620">
    <property type="entry name" value="HUPs"/>
    <property type="match status" value="2"/>
</dbReference>
<dbReference type="Gene3D" id="1.10.730.10">
    <property type="entry name" value="Isoleucyl-tRNA Synthetase, Domain 1"/>
    <property type="match status" value="1"/>
</dbReference>
<dbReference type="Gene3D" id="3.90.740.10">
    <property type="entry name" value="Valyl/Leucyl/Isoleucyl-tRNA synthetase, editing domain"/>
    <property type="match status" value="1"/>
</dbReference>
<dbReference type="HAMAP" id="MF_00049_B">
    <property type="entry name" value="Leu_tRNA_synth_B"/>
    <property type="match status" value="1"/>
</dbReference>
<dbReference type="InterPro" id="IPR001412">
    <property type="entry name" value="aa-tRNA-synth_I_CS"/>
</dbReference>
<dbReference type="InterPro" id="IPR002300">
    <property type="entry name" value="aa-tRNA-synth_Ia"/>
</dbReference>
<dbReference type="InterPro" id="IPR002302">
    <property type="entry name" value="Leu-tRNA-ligase"/>
</dbReference>
<dbReference type="InterPro" id="IPR025709">
    <property type="entry name" value="Leu_tRNA-synth_edit"/>
</dbReference>
<dbReference type="InterPro" id="IPR013155">
    <property type="entry name" value="M/V/L/I-tRNA-synth_anticd-bd"/>
</dbReference>
<dbReference type="InterPro" id="IPR015413">
    <property type="entry name" value="Methionyl/Leucyl_tRNA_Synth"/>
</dbReference>
<dbReference type="InterPro" id="IPR014729">
    <property type="entry name" value="Rossmann-like_a/b/a_fold"/>
</dbReference>
<dbReference type="InterPro" id="IPR009080">
    <property type="entry name" value="tRNAsynth_Ia_anticodon-bd"/>
</dbReference>
<dbReference type="InterPro" id="IPR009008">
    <property type="entry name" value="Val/Leu/Ile-tRNA-synth_edit"/>
</dbReference>
<dbReference type="NCBIfam" id="TIGR00396">
    <property type="entry name" value="leuS_bact"/>
    <property type="match status" value="1"/>
</dbReference>
<dbReference type="PANTHER" id="PTHR43740:SF2">
    <property type="entry name" value="LEUCINE--TRNA LIGASE, MITOCHONDRIAL"/>
    <property type="match status" value="1"/>
</dbReference>
<dbReference type="PANTHER" id="PTHR43740">
    <property type="entry name" value="LEUCYL-TRNA SYNTHETASE"/>
    <property type="match status" value="1"/>
</dbReference>
<dbReference type="Pfam" id="PF08264">
    <property type="entry name" value="Anticodon_1"/>
    <property type="match status" value="1"/>
</dbReference>
<dbReference type="Pfam" id="PF00133">
    <property type="entry name" value="tRNA-synt_1"/>
    <property type="match status" value="2"/>
</dbReference>
<dbReference type="Pfam" id="PF13603">
    <property type="entry name" value="tRNA-synt_1_2"/>
    <property type="match status" value="1"/>
</dbReference>
<dbReference type="Pfam" id="PF09334">
    <property type="entry name" value="tRNA-synt_1g"/>
    <property type="match status" value="1"/>
</dbReference>
<dbReference type="PRINTS" id="PR00985">
    <property type="entry name" value="TRNASYNTHLEU"/>
</dbReference>
<dbReference type="SUPFAM" id="SSF47323">
    <property type="entry name" value="Anticodon-binding domain of a subclass of class I aminoacyl-tRNA synthetases"/>
    <property type="match status" value="1"/>
</dbReference>
<dbReference type="SUPFAM" id="SSF52374">
    <property type="entry name" value="Nucleotidylyl transferase"/>
    <property type="match status" value="1"/>
</dbReference>
<dbReference type="SUPFAM" id="SSF50677">
    <property type="entry name" value="ValRS/IleRS/LeuRS editing domain"/>
    <property type="match status" value="1"/>
</dbReference>
<dbReference type="PROSITE" id="PS00178">
    <property type="entry name" value="AA_TRNA_LIGASE_I"/>
    <property type="match status" value="1"/>
</dbReference>
<name>SYL_KLEP7</name>
<proteinExistence type="inferred from homology"/>
<gene>
    <name evidence="1" type="primary">leuS</name>
    <name type="ordered locus">KPN78578_06630</name>
    <name type="ORF">KPN_00674</name>
</gene>
<reference key="1">
    <citation type="submission" date="2006-09" db="EMBL/GenBank/DDBJ databases">
        <authorList>
            <consortium name="The Klebsiella pneumonia Genome Sequencing Project"/>
            <person name="McClelland M."/>
            <person name="Sanderson E.K."/>
            <person name="Spieth J."/>
            <person name="Clifton W.S."/>
            <person name="Latreille P."/>
            <person name="Sabo A."/>
            <person name="Pepin K."/>
            <person name="Bhonagiri V."/>
            <person name="Porwollik S."/>
            <person name="Ali J."/>
            <person name="Wilson R.K."/>
        </authorList>
    </citation>
    <scope>NUCLEOTIDE SEQUENCE [LARGE SCALE GENOMIC DNA]</scope>
    <source>
        <strain>ATCC 700721 / MGH 78578</strain>
    </source>
</reference>